<feature type="chain" id="PRO_0000242276" description="Phosphomethylpyrimidine synthase">
    <location>
        <begin position="1"/>
        <end position="646"/>
    </location>
</feature>
<feature type="region of interest" description="Disordered" evidence="2">
    <location>
        <begin position="1"/>
        <end position="30"/>
    </location>
</feature>
<feature type="compositionally biased region" description="Polar residues" evidence="2">
    <location>
        <begin position="1"/>
        <end position="13"/>
    </location>
</feature>
<feature type="binding site" evidence="1">
    <location>
        <position position="221"/>
    </location>
    <ligand>
        <name>substrate</name>
    </ligand>
</feature>
<feature type="binding site" evidence="1">
    <location>
        <position position="250"/>
    </location>
    <ligand>
        <name>substrate</name>
    </ligand>
</feature>
<feature type="binding site" evidence="1">
    <location>
        <position position="279"/>
    </location>
    <ligand>
        <name>substrate</name>
    </ligand>
</feature>
<feature type="binding site" evidence="1">
    <location>
        <position position="315"/>
    </location>
    <ligand>
        <name>substrate</name>
    </ligand>
</feature>
<feature type="binding site" evidence="1">
    <location>
        <begin position="335"/>
        <end position="337"/>
    </location>
    <ligand>
        <name>substrate</name>
    </ligand>
</feature>
<feature type="binding site" evidence="1">
    <location>
        <begin position="376"/>
        <end position="379"/>
    </location>
    <ligand>
        <name>substrate</name>
    </ligand>
</feature>
<feature type="binding site" evidence="1">
    <location>
        <position position="415"/>
    </location>
    <ligand>
        <name>substrate</name>
    </ligand>
</feature>
<feature type="binding site" evidence="1">
    <location>
        <position position="419"/>
    </location>
    <ligand>
        <name>Zn(2+)</name>
        <dbReference type="ChEBI" id="CHEBI:29105"/>
    </ligand>
</feature>
<feature type="binding site" evidence="1">
    <location>
        <position position="442"/>
    </location>
    <ligand>
        <name>substrate</name>
    </ligand>
</feature>
<feature type="binding site" evidence="1">
    <location>
        <position position="483"/>
    </location>
    <ligand>
        <name>Zn(2+)</name>
        <dbReference type="ChEBI" id="CHEBI:29105"/>
    </ligand>
</feature>
<feature type="binding site" evidence="1">
    <location>
        <position position="563"/>
    </location>
    <ligand>
        <name>[4Fe-4S] cluster</name>
        <dbReference type="ChEBI" id="CHEBI:49883"/>
        <note>4Fe-4S-S-AdoMet</note>
    </ligand>
</feature>
<feature type="binding site" evidence="1">
    <location>
        <position position="566"/>
    </location>
    <ligand>
        <name>[4Fe-4S] cluster</name>
        <dbReference type="ChEBI" id="CHEBI:49883"/>
        <note>4Fe-4S-S-AdoMet</note>
    </ligand>
</feature>
<feature type="binding site" evidence="1">
    <location>
        <position position="571"/>
    </location>
    <ligand>
        <name>[4Fe-4S] cluster</name>
        <dbReference type="ChEBI" id="CHEBI:49883"/>
        <note>4Fe-4S-S-AdoMet</note>
    </ligand>
</feature>
<keyword id="KW-0004">4Fe-4S</keyword>
<keyword id="KW-0408">Iron</keyword>
<keyword id="KW-0411">Iron-sulfur</keyword>
<keyword id="KW-0456">Lyase</keyword>
<keyword id="KW-0479">Metal-binding</keyword>
<keyword id="KW-1185">Reference proteome</keyword>
<keyword id="KW-0949">S-adenosyl-L-methionine</keyword>
<keyword id="KW-0784">Thiamine biosynthesis</keyword>
<keyword id="KW-0862">Zinc</keyword>
<name>THIC_NITWN</name>
<evidence type="ECO:0000255" key="1">
    <source>
        <dbReference type="HAMAP-Rule" id="MF_00089"/>
    </source>
</evidence>
<evidence type="ECO:0000256" key="2">
    <source>
        <dbReference type="SAM" id="MobiDB-lite"/>
    </source>
</evidence>
<accession>Q3SPS0</accession>
<comment type="function">
    <text evidence="1">Catalyzes the synthesis of the hydroxymethylpyrimidine phosphate (HMP-P) moiety of thiamine from aminoimidazole ribotide (AIR) in a radical S-adenosyl-L-methionine (SAM)-dependent reaction.</text>
</comment>
<comment type="catalytic activity">
    <reaction evidence="1">
        <text>5-amino-1-(5-phospho-beta-D-ribosyl)imidazole + S-adenosyl-L-methionine = 4-amino-2-methyl-5-(phosphooxymethyl)pyrimidine + CO + 5'-deoxyadenosine + formate + L-methionine + 3 H(+)</text>
        <dbReference type="Rhea" id="RHEA:24840"/>
        <dbReference type="ChEBI" id="CHEBI:15378"/>
        <dbReference type="ChEBI" id="CHEBI:15740"/>
        <dbReference type="ChEBI" id="CHEBI:17245"/>
        <dbReference type="ChEBI" id="CHEBI:17319"/>
        <dbReference type="ChEBI" id="CHEBI:57844"/>
        <dbReference type="ChEBI" id="CHEBI:58354"/>
        <dbReference type="ChEBI" id="CHEBI:59789"/>
        <dbReference type="ChEBI" id="CHEBI:137981"/>
        <dbReference type="EC" id="4.1.99.17"/>
    </reaction>
</comment>
<comment type="cofactor">
    <cofactor evidence="1">
        <name>[4Fe-4S] cluster</name>
        <dbReference type="ChEBI" id="CHEBI:49883"/>
    </cofactor>
    <text evidence="1">Binds 1 [4Fe-4S] cluster per subunit. The cluster is coordinated with 3 cysteines and an exchangeable S-adenosyl-L-methionine.</text>
</comment>
<comment type="pathway">
    <text evidence="1">Cofactor biosynthesis; thiamine diphosphate biosynthesis.</text>
</comment>
<comment type="subunit">
    <text evidence="1">Homodimer.</text>
</comment>
<comment type="similarity">
    <text evidence="1">Belongs to the ThiC family.</text>
</comment>
<protein>
    <recommendedName>
        <fullName evidence="1">Phosphomethylpyrimidine synthase</fullName>
        <ecNumber evidence="1">4.1.99.17</ecNumber>
    </recommendedName>
    <alternativeName>
        <fullName evidence="1">Hydroxymethylpyrimidine phosphate synthase</fullName>
        <shortName evidence="1">HMP-P synthase</shortName>
        <shortName evidence="1">HMP-phosphate synthase</shortName>
        <shortName evidence="1">HMPP synthase</shortName>
    </alternativeName>
    <alternativeName>
        <fullName evidence="1">Thiamine biosynthesis protein ThiC</fullName>
    </alternativeName>
</protein>
<dbReference type="EC" id="4.1.99.17" evidence="1"/>
<dbReference type="EMBL" id="CP000115">
    <property type="protein sequence ID" value="ABA05721.1"/>
    <property type="molecule type" value="Genomic_DNA"/>
</dbReference>
<dbReference type="RefSeq" id="WP_011315676.1">
    <property type="nucleotide sequence ID" value="NC_007406.1"/>
</dbReference>
<dbReference type="SMR" id="Q3SPS0"/>
<dbReference type="STRING" id="323098.Nwi_2468"/>
<dbReference type="KEGG" id="nwi:Nwi_2468"/>
<dbReference type="eggNOG" id="COG0422">
    <property type="taxonomic scope" value="Bacteria"/>
</dbReference>
<dbReference type="HOGENOM" id="CLU_013181_2_1_5"/>
<dbReference type="OrthoDB" id="9805897at2"/>
<dbReference type="UniPathway" id="UPA00060"/>
<dbReference type="Proteomes" id="UP000002531">
    <property type="component" value="Chromosome"/>
</dbReference>
<dbReference type="GO" id="GO:0005829">
    <property type="term" value="C:cytosol"/>
    <property type="evidence" value="ECO:0007669"/>
    <property type="project" value="TreeGrafter"/>
</dbReference>
<dbReference type="GO" id="GO:0051539">
    <property type="term" value="F:4 iron, 4 sulfur cluster binding"/>
    <property type="evidence" value="ECO:0007669"/>
    <property type="project" value="UniProtKB-KW"/>
</dbReference>
<dbReference type="GO" id="GO:0016830">
    <property type="term" value="F:carbon-carbon lyase activity"/>
    <property type="evidence" value="ECO:0007669"/>
    <property type="project" value="InterPro"/>
</dbReference>
<dbReference type="GO" id="GO:0008270">
    <property type="term" value="F:zinc ion binding"/>
    <property type="evidence" value="ECO:0007669"/>
    <property type="project" value="UniProtKB-UniRule"/>
</dbReference>
<dbReference type="GO" id="GO:0009228">
    <property type="term" value="P:thiamine biosynthetic process"/>
    <property type="evidence" value="ECO:0007669"/>
    <property type="project" value="UniProtKB-KW"/>
</dbReference>
<dbReference type="GO" id="GO:0009229">
    <property type="term" value="P:thiamine diphosphate biosynthetic process"/>
    <property type="evidence" value="ECO:0007669"/>
    <property type="project" value="UniProtKB-UniRule"/>
</dbReference>
<dbReference type="FunFam" id="3.20.20.540:FF:000001">
    <property type="entry name" value="Phosphomethylpyrimidine synthase"/>
    <property type="match status" value="1"/>
</dbReference>
<dbReference type="Gene3D" id="6.10.250.620">
    <property type="match status" value="1"/>
</dbReference>
<dbReference type="Gene3D" id="3.20.20.540">
    <property type="entry name" value="Radical SAM ThiC family, central domain"/>
    <property type="match status" value="1"/>
</dbReference>
<dbReference type="HAMAP" id="MF_00089">
    <property type="entry name" value="ThiC"/>
    <property type="match status" value="1"/>
</dbReference>
<dbReference type="InterPro" id="IPR037509">
    <property type="entry name" value="ThiC"/>
</dbReference>
<dbReference type="InterPro" id="IPR025747">
    <property type="entry name" value="ThiC-associated_dom"/>
</dbReference>
<dbReference type="InterPro" id="IPR038521">
    <property type="entry name" value="ThiC/Bza_core_dom"/>
</dbReference>
<dbReference type="InterPro" id="IPR002817">
    <property type="entry name" value="ThiC/BzaA/B"/>
</dbReference>
<dbReference type="NCBIfam" id="NF006763">
    <property type="entry name" value="PRK09284.1"/>
    <property type="match status" value="1"/>
</dbReference>
<dbReference type="NCBIfam" id="NF009895">
    <property type="entry name" value="PRK13352.1"/>
    <property type="match status" value="1"/>
</dbReference>
<dbReference type="NCBIfam" id="TIGR00190">
    <property type="entry name" value="thiC"/>
    <property type="match status" value="1"/>
</dbReference>
<dbReference type="PANTHER" id="PTHR30557:SF1">
    <property type="entry name" value="PHOSPHOMETHYLPYRIMIDINE SYNTHASE, CHLOROPLASTIC"/>
    <property type="match status" value="1"/>
</dbReference>
<dbReference type="PANTHER" id="PTHR30557">
    <property type="entry name" value="THIAMINE BIOSYNTHESIS PROTEIN THIC"/>
    <property type="match status" value="1"/>
</dbReference>
<dbReference type="Pfam" id="PF13667">
    <property type="entry name" value="ThiC-associated"/>
    <property type="match status" value="1"/>
</dbReference>
<dbReference type="Pfam" id="PF01964">
    <property type="entry name" value="ThiC_Rad_SAM"/>
    <property type="match status" value="1"/>
</dbReference>
<dbReference type="SFLD" id="SFLDF00407">
    <property type="entry name" value="phosphomethylpyrimidine_syntha"/>
    <property type="match status" value="1"/>
</dbReference>
<dbReference type="SFLD" id="SFLDG01114">
    <property type="entry name" value="phosphomethylpyrimidine_syntha"/>
    <property type="match status" value="1"/>
</dbReference>
<dbReference type="SFLD" id="SFLDS00113">
    <property type="entry name" value="Radical_SAM_Phosphomethylpyrim"/>
    <property type="match status" value="1"/>
</dbReference>
<gene>
    <name evidence="1" type="primary">thiC</name>
    <name type="ordered locus">Nwi_2468</name>
</gene>
<proteinExistence type="inferred from homology"/>
<sequence>MNIRSNPDTTRPAVTTGALPSSRKMFSAPDAAPDLRVPLREILLSEGAGEPNLPVYDTSGPYTDPNVIIDVNAGLPRTRLAWVKERGGVEEYDGREIKPEDNGNVGASHAAAAFKAHHKPLRGIGDAPITQLEFARAGIITKEMIYVAERENLGRKKQLERAEAALADGEAFGASVPAFITPEFVREEIARGRAIIPSNINHAELEPMIIGRNFLVKINANIGNSAVTSSVEEEVDKMVWAIRWGADTVMDLSTGRNIHTTREWILRNSPVPIGTVPIYQALEKCDGDPVKLTWELYRDTLVEQCEQGVDYFTIHAGVRLPYIHLTADRVTGIVSRGGSIMAKWCLAHHKESFLYTHFEEICDLMRKYDVSFSLGDGLRPGSIADANDRAQFAELETLGELTQIAWKKGCQVMIEGPGHVPMHKIKINMDKQLKECGEAPFYTLGPLTTDIAPGYDHITSGIGAAMIGWFGCAMLCYVTPKEHLGLPNRDDVKTGVITYKIAAHAADLAKGHPAAQLRDDALSRARFDFRWQDQFNLGLDPDTAVAFHDETLPKDAHKVAHFCSMCGPKFCSMKITQDVRDYAATLGDNEKAALYPDTAPKANDAAGVPEPSYRDQGMKEMSARFKEMGGNVYLDAEKVKESNRVL</sequence>
<reference key="1">
    <citation type="journal article" date="2006" name="Appl. Environ. Microbiol.">
        <title>Genome sequence of the chemolithoautotrophic nitrite-oxidizing bacterium Nitrobacter winogradskyi Nb-255.</title>
        <authorList>
            <person name="Starkenburg S.R."/>
            <person name="Chain P.S.G."/>
            <person name="Sayavedra-Soto L.A."/>
            <person name="Hauser L."/>
            <person name="Land M.L."/>
            <person name="Larimer F.W."/>
            <person name="Malfatti S.A."/>
            <person name="Klotz M.G."/>
            <person name="Bottomley P.J."/>
            <person name="Arp D.J."/>
            <person name="Hickey W.J."/>
        </authorList>
    </citation>
    <scope>NUCLEOTIDE SEQUENCE [LARGE SCALE GENOMIC DNA]</scope>
    <source>
        <strain>ATCC 25391 / DSM 10237 / CIP 104748 / NCIMB 11846 / Nb-255</strain>
    </source>
</reference>
<organism>
    <name type="scientific">Nitrobacter winogradskyi (strain ATCC 25391 / DSM 10237 / CIP 104748 / NCIMB 11846 / Nb-255)</name>
    <dbReference type="NCBI Taxonomy" id="323098"/>
    <lineage>
        <taxon>Bacteria</taxon>
        <taxon>Pseudomonadati</taxon>
        <taxon>Pseudomonadota</taxon>
        <taxon>Alphaproteobacteria</taxon>
        <taxon>Hyphomicrobiales</taxon>
        <taxon>Nitrobacteraceae</taxon>
        <taxon>Nitrobacter</taxon>
    </lineage>
</organism>